<dbReference type="EC" id="3.5.4.2" evidence="1"/>
<dbReference type="EMBL" id="CP000102">
    <property type="protein sequence ID" value="ABC57685.1"/>
    <property type="molecule type" value="Genomic_DNA"/>
</dbReference>
<dbReference type="RefSeq" id="WP_011406884.1">
    <property type="nucleotide sequence ID" value="NC_007681.1"/>
</dbReference>
<dbReference type="SMR" id="Q2NER8"/>
<dbReference type="STRING" id="339860.Msp_1308"/>
<dbReference type="GeneID" id="41325878"/>
<dbReference type="KEGG" id="mst:Msp_1308"/>
<dbReference type="eggNOG" id="arCOG00693">
    <property type="taxonomic scope" value="Archaea"/>
</dbReference>
<dbReference type="HOGENOM" id="CLU_027935_0_0_2"/>
<dbReference type="OrthoDB" id="24954at2157"/>
<dbReference type="Proteomes" id="UP000001931">
    <property type="component" value="Chromosome"/>
</dbReference>
<dbReference type="GO" id="GO:0000034">
    <property type="term" value="F:adenine deaminase activity"/>
    <property type="evidence" value="ECO:0007669"/>
    <property type="project" value="UniProtKB-UniRule"/>
</dbReference>
<dbReference type="GO" id="GO:0006146">
    <property type="term" value="P:adenine catabolic process"/>
    <property type="evidence" value="ECO:0007669"/>
    <property type="project" value="InterPro"/>
</dbReference>
<dbReference type="CDD" id="cd01295">
    <property type="entry name" value="AdeC"/>
    <property type="match status" value="1"/>
</dbReference>
<dbReference type="Gene3D" id="3.20.20.140">
    <property type="entry name" value="Metal-dependent hydrolases"/>
    <property type="match status" value="1"/>
</dbReference>
<dbReference type="Gene3D" id="2.30.40.10">
    <property type="entry name" value="Urease, subunit C, domain 1"/>
    <property type="match status" value="1"/>
</dbReference>
<dbReference type="HAMAP" id="MF_01518">
    <property type="entry name" value="Adenine_deamin"/>
    <property type="match status" value="1"/>
</dbReference>
<dbReference type="InterPro" id="IPR006679">
    <property type="entry name" value="Adenine_deam"/>
</dbReference>
<dbReference type="InterPro" id="IPR026912">
    <property type="entry name" value="Adenine_deam_C"/>
</dbReference>
<dbReference type="InterPro" id="IPR006680">
    <property type="entry name" value="Amidohydro-rel"/>
</dbReference>
<dbReference type="InterPro" id="IPR011059">
    <property type="entry name" value="Metal-dep_hydrolase_composite"/>
</dbReference>
<dbReference type="InterPro" id="IPR032466">
    <property type="entry name" value="Metal_Hydrolase"/>
</dbReference>
<dbReference type="NCBIfam" id="TIGR01178">
    <property type="entry name" value="ade"/>
    <property type="match status" value="1"/>
</dbReference>
<dbReference type="PANTHER" id="PTHR11113:SF2">
    <property type="entry name" value="ADENINE DEAMINASE"/>
    <property type="match status" value="1"/>
</dbReference>
<dbReference type="PANTHER" id="PTHR11113">
    <property type="entry name" value="N-ACETYLGLUCOSAMINE-6-PHOSPHATE DEACETYLASE"/>
    <property type="match status" value="1"/>
</dbReference>
<dbReference type="Pfam" id="PF13382">
    <property type="entry name" value="Adenine_deam_C"/>
    <property type="match status" value="1"/>
</dbReference>
<dbReference type="Pfam" id="PF01979">
    <property type="entry name" value="Amidohydro_1"/>
    <property type="match status" value="1"/>
</dbReference>
<dbReference type="SUPFAM" id="SSF51338">
    <property type="entry name" value="Composite domain of metallo-dependent hydrolases"/>
    <property type="match status" value="1"/>
</dbReference>
<dbReference type="SUPFAM" id="SSF51556">
    <property type="entry name" value="Metallo-dependent hydrolases"/>
    <property type="match status" value="1"/>
</dbReference>
<keyword id="KW-0378">Hydrolase</keyword>
<keyword id="KW-0464">Manganese</keyword>
<keyword id="KW-1185">Reference proteome</keyword>
<accession>Q2NER8</accession>
<comment type="catalytic activity">
    <reaction evidence="1">
        <text>adenine + H2O + H(+) = hypoxanthine + NH4(+)</text>
        <dbReference type="Rhea" id="RHEA:23688"/>
        <dbReference type="ChEBI" id="CHEBI:15377"/>
        <dbReference type="ChEBI" id="CHEBI:15378"/>
        <dbReference type="ChEBI" id="CHEBI:16708"/>
        <dbReference type="ChEBI" id="CHEBI:17368"/>
        <dbReference type="ChEBI" id="CHEBI:28938"/>
        <dbReference type="EC" id="3.5.4.2"/>
    </reaction>
</comment>
<comment type="cofactor">
    <cofactor evidence="1">
        <name>Mn(2+)</name>
        <dbReference type="ChEBI" id="CHEBI:29035"/>
    </cofactor>
</comment>
<comment type="similarity">
    <text evidence="1">Belongs to the metallo-dependent hydrolases superfamily. Adenine deaminase family.</text>
</comment>
<reference key="1">
    <citation type="journal article" date="2006" name="J. Bacteriol.">
        <title>The genome sequence of Methanosphaera stadtmanae reveals why this human intestinal archaeon is restricted to methanol and H2 for methane formation and ATP synthesis.</title>
        <authorList>
            <person name="Fricke W.F."/>
            <person name="Seedorf H."/>
            <person name="Henne A."/>
            <person name="Kruer M."/>
            <person name="Liesegang H."/>
            <person name="Hedderich R."/>
            <person name="Gottschalk G."/>
            <person name="Thauer R.K."/>
        </authorList>
    </citation>
    <scope>NUCLEOTIDE SEQUENCE [LARGE SCALE GENOMIC DNA]</scope>
    <source>
        <strain>ATCC 43021 / DSM 3091 / JCM 11832 / MCB-3</strain>
    </source>
</reference>
<protein>
    <recommendedName>
        <fullName evidence="1">Adenine deaminase</fullName>
        <shortName evidence="1">Adenase</shortName>
        <shortName evidence="1">Adenine aminase</shortName>
        <ecNumber evidence="1">3.5.4.2</ecNumber>
    </recommendedName>
</protein>
<evidence type="ECO:0000255" key="1">
    <source>
        <dbReference type="HAMAP-Rule" id="MF_01518"/>
    </source>
</evidence>
<feature type="chain" id="PRO_0000292405" description="Adenine deaminase">
    <location>
        <begin position="1"/>
        <end position="542"/>
    </location>
</feature>
<name>ADEC_METST</name>
<sequence length="542" mass="59673">MLIKGNILNVFTDEIYPGEIKIEHGIIESIKEVNADFNDIIVPGFIDAHIHIESSMLTPSRFAEIALRHGTTSVIADPHEIANVMGMDGIDYMIDDAKKTPLKYYFTAPSCVPATKFEKSGATISPNIIDNLLSRPEFVALGEVMDYNAVISNEKSILEKIKIAKKYHKPIDGHAPLLSGKNLQKYVKHGVITDHESTTKKEVAEKKRMGMKIMIREGSESKMLEKLIYSNCDFIVSDDLKPEDLINGHLDKCLRKAVDYGMDPYEAIKLVTINPAEHYNLNAGSISPGKSADLVFIDNLRDFTVKRVVINGNTIFKKQKLLFRANPRPIDTTLHVSLTKPEDFDLKAQNPAHKSATVNLINVSDNTIITKQSSAKLSIQKKTIIPSVFEDILKISVVDRYGGNTISNGFVKGFGIKNGAIASSVSHDSHNIIVVGTNSEYMSRATNHLIENKGGLAAISNQAKLDVTLPIAGLMSDKPAKVVANNSAKLNELVSNMGCELSSPFTSLSFMALPVVPEVKMTTNGLFNVNTHQFIDIIKEEK</sequence>
<organism>
    <name type="scientific">Methanosphaera stadtmanae (strain ATCC 43021 / DSM 3091 / JCM 11832 / MCB-3)</name>
    <dbReference type="NCBI Taxonomy" id="339860"/>
    <lineage>
        <taxon>Archaea</taxon>
        <taxon>Methanobacteriati</taxon>
        <taxon>Methanobacteriota</taxon>
        <taxon>Methanomada group</taxon>
        <taxon>Methanobacteria</taxon>
        <taxon>Methanobacteriales</taxon>
        <taxon>Methanobacteriaceae</taxon>
        <taxon>Methanosphaera</taxon>
    </lineage>
</organism>
<proteinExistence type="inferred from homology"/>
<gene>
    <name evidence="1" type="primary">ade</name>
    <name type="ordered locus">Msp_1308</name>
</gene>